<dbReference type="EMBL" id="CP000891">
    <property type="protein sequence ID" value="ABX47910.1"/>
    <property type="molecule type" value="Genomic_DNA"/>
</dbReference>
<dbReference type="RefSeq" id="WP_006083053.1">
    <property type="nucleotide sequence ID" value="NC_009997.1"/>
</dbReference>
<dbReference type="SMR" id="A9L111"/>
<dbReference type="GeneID" id="11771044"/>
<dbReference type="KEGG" id="sbn:Sbal195_0732"/>
<dbReference type="HOGENOM" id="CLU_082184_2_2_6"/>
<dbReference type="Proteomes" id="UP000000770">
    <property type="component" value="Chromosome"/>
</dbReference>
<dbReference type="GO" id="GO:0022625">
    <property type="term" value="C:cytosolic large ribosomal subunit"/>
    <property type="evidence" value="ECO:0007669"/>
    <property type="project" value="TreeGrafter"/>
</dbReference>
<dbReference type="GO" id="GO:0003729">
    <property type="term" value="F:mRNA binding"/>
    <property type="evidence" value="ECO:0007669"/>
    <property type="project" value="TreeGrafter"/>
</dbReference>
<dbReference type="GO" id="GO:0003735">
    <property type="term" value="F:structural constituent of ribosome"/>
    <property type="evidence" value="ECO:0007669"/>
    <property type="project" value="InterPro"/>
</dbReference>
<dbReference type="GO" id="GO:0017148">
    <property type="term" value="P:negative regulation of translation"/>
    <property type="evidence" value="ECO:0007669"/>
    <property type="project" value="TreeGrafter"/>
</dbReference>
<dbReference type="GO" id="GO:0006412">
    <property type="term" value="P:translation"/>
    <property type="evidence" value="ECO:0007669"/>
    <property type="project" value="UniProtKB-UniRule"/>
</dbReference>
<dbReference type="CDD" id="cd00392">
    <property type="entry name" value="Ribosomal_L13"/>
    <property type="match status" value="1"/>
</dbReference>
<dbReference type="FunFam" id="3.90.1180.10:FF:000001">
    <property type="entry name" value="50S ribosomal protein L13"/>
    <property type="match status" value="1"/>
</dbReference>
<dbReference type="Gene3D" id="3.90.1180.10">
    <property type="entry name" value="Ribosomal protein L13"/>
    <property type="match status" value="1"/>
</dbReference>
<dbReference type="HAMAP" id="MF_01366">
    <property type="entry name" value="Ribosomal_uL13"/>
    <property type="match status" value="1"/>
</dbReference>
<dbReference type="InterPro" id="IPR005822">
    <property type="entry name" value="Ribosomal_uL13"/>
</dbReference>
<dbReference type="InterPro" id="IPR005823">
    <property type="entry name" value="Ribosomal_uL13_bac-type"/>
</dbReference>
<dbReference type="InterPro" id="IPR023563">
    <property type="entry name" value="Ribosomal_uL13_CS"/>
</dbReference>
<dbReference type="InterPro" id="IPR036899">
    <property type="entry name" value="Ribosomal_uL13_sf"/>
</dbReference>
<dbReference type="NCBIfam" id="TIGR01066">
    <property type="entry name" value="rplM_bact"/>
    <property type="match status" value="1"/>
</dbReference>
<dbReference type="PANTHER" id="PTHR11545:SF2">
    <property type="entry name" value="LARGE RIBOSOMAL SUBUNIT PROTEIN UL13M"/>
    <property type="match status" value="1"/>
</dbReference>
<dbReference type="PANTHER" id="PTHR11545">
    <property type="entry name" value="RIBOSOMAL PROTEIN L13"/>
    <property type="match status" value="1"/>
</dbReference>
<dbReference type="Pfam" id="PF00572">
    <property type="entry name" value="Ribosomal_L13"/>
    <property type="match status" value="1"/>
</dbReference>
<dbReference type="PIRSF" id="PIRSF002181">
    <property type="entry name" value="Ribosomal_L13"/>
    <property type="match status" value="1"/>
</dbReference>
<dbReference type="SUPFAM" id="SSF52161">
    <property type="entry name" value="Ribosomal protein L13"/>
    <property type="match status" value="1"/>
</dbReference>
<dbReference type="PROSITE" id="PS00783">
    <property type="entry name" value="RIBOSOMAL_L13"/>
    <property type="match status" value="1"/>
</dbReference>
<comment type="function">
    <text evidence="1">This protein is one of the early assembly proteins of the 50S ribosomal subunit, although it is not seen to bind rRNA by itself. It is important during the early stages of 50S assembly.</text>
</comment>
<comment type="subunit">
    <text evidence="1">Part of the 50S ribosomal subunit.</text>
</comment>
<comment type="similarity">
    <text evidence="1">Belongs to the universal ribosomal protein uL13 family.</text>
</comment>
<feature type="chain" id="PRO_1000087107" description="Large ribosomal subunit protein uL13">
    <location>
        <begin position="1"/>
        <end position="142"/>
    </location>
</feature>
<evidence type="ECO:0000255" key="1">
    <source>
        <dbReference type="HAMAP-Rule" id="MF_01366"/>
    </source>
</evidence>
<evidence type="ECO:0000305" key="2"/>
<reference key="1">
    <citation type="submission" date="2007-11" db="EMBL/GenBank/DDBJ databases">
        <title>Complete sequence of chromosome of Shewanella baltica OS195.</title>
        <authorList>
            <consortium name="US DOE Joint Genome Institute"/>
            <person name="Copeland A."/>
            <person name="Lucas S."/>
            <person name="Lapidus A."/>
            <person name="Barry K."/>
            <person name="Glavina del Rio T."/>
            <person name="Dalin E."/>
            <person name="Tice H."/>
            <person name="Pitluck S."/>
            <person name="Chain P."/>
            <person name="Malfatti S."/>
            <person name="Shin M."/>
            <person name="Vergez L."/>
            <person name="Schmutz J."/>
            <person name="Larimer F."/>
            <person name="Land M."/>
            <person name="Hauser L."/>
            <person name="Kyrpides N."/>
            <person name="Kim E."/>
            <person name="Brettar I."/>
            <person name="Rodrigues J."/>
            <person name="Konstantinidis K."/>
            <person name="Klappenbach J."/>
            <person name="Hofle M."/>
            <person name="Tiedje J."/>
            <person name="Richardson P."/>
        </authorList>
    </citation>
    <scope>NUCLEOTIDE SEQUENCE [LARGE SCALE GENOMIC DNA]</scope>
    <source>
        <strain>OS195</strain>
    </source>
</reference>
<name>RL13_SHEB9</name>
<keyword id="KW-0687">Ribonucleoprotein</keyword>
<keyword id="KW-0689">Ribosomal protein</keyword>
<organism>
    <name type="scientific">Shewanella baltica (strain OS195)</name>
    <dbReference type="NCBI Taxonomy" id="399599"/>
    <lineage>
        <taxon>Bacteria</taxon>
        <taxon>Pseudomonadati</taxon>
        <taxon>Pseudomonadota</taxon>
        <taxon>Gammaproteobacteria</taxon>
        <taxon>Alteromonadales</taxon>
        <taxon>Shewanellaceae</taxon>
        <taxon>Shewanella</taxon>
    </lineage>
</organism>
<accession>A9L111</accession>
<protein>
    <recommendedName>
        <fullName evidence="1">Large ribosomal subunit protein uL13</fullName>
    </recommendedName>
    <alternativeName>
        <fullName evidence="2">50S ribosomal protein L13</fullName>
    </alternativeName>
</protein>
<proteinExistence type="inferred from homology"/>
<sequence length="142" mass="15738">MKTFTATPETVTRDWFVVDADGKTLGRIATEIATRLRGKHKPEYTPHVDTGDYIIVVNAEKVTVTGNKAKGKTYYSHSGFPGGIKQISFEKLQAQKPEMIIEKAVKGMLPKGPLGRAMFRKLKVYAGAEHNHTAQQPQVLDI</sequence>
<gene>
    <name evidence="1" type="primary">rplM</name>
    <name type="ordered locus">Sbal195_0732</name>
</gene>